<reference key="1">
    <citation type="journal article" date="2009" name="Appl. Environ. Microbiol.">
        <title>Genome analysis of the meat starter culture bacterium Staphylococcus carnosus TM300.</title>
        <authorList>
            <person name="Rosenstein R."/>
            <person name="Nerz C."/>
            <person name="Biswas L."/>
            <person name="Resch A."/>
            <person name="Raddatz G."/>
            <person name="Schuster S.C."/>
            <person name="Goetz F."/>
        </authorList>
    </citation>
    <scope>NUCLEOTIDE SEQUENCE [LARGE SCALE GENOMIC DNA]</scope>
    <source>
        <strain>TM300</strain>
    </source>
</reference>
<dbReference type="EC" id="2.4.2.18" evidence="1"/>
<dbReference type="EMBL" id="AM295250">
    <property type="protein sequence ID" value="CAL27922.1"/>
    <property type="molecule type" value="Genomic_DNA"/>
</dbReference>
<dbReference type="RefSeq" id="WP_015900263.1">
    <property type="nucleotide sequence ID" value="NC_012121.1"/>
</dbReference>
<dbReference type="SMR" id="B9DP50"/>
<dbReference type="GeneID" id="93793439"/>
<dbReference type="KEGG" id="sca:SCA_1014"/>
<dbReference type="eggNOG" id="COG0547">
    <property type="taxonomic scope" value="Bacteria"/>
</dbReference>
<dbReference type="HOGENOM" id="CLU_034315_3_0_9"/>
<dbReference type="OrthoDB" id="9806430at2"/>
<dbReference type="BioCyc" id="SCAR396513:SCA_RS05085-MONOMER"/>
<dbReference type="UniPathway" id="UPA00035">
    <property type="reaction ID" value="UER00041"/>
</dbReference>
<dbReference type="Proteomes" id="UP000000444">
    <property type="component" value="Chromosome"/>
</dbReference>
<dbReference type="GO" id="GO:0005829">
    <property type="term" value="C:cytosol"/>
    <property type="evidence" value="ECO:0007669"/>
    <property type="project" value="TreeGrafter"/>
</dbReference>
<dbReference type="GO" id="GO:0004048">
    <property type="term" value="F:anthranilate phosphoribosyltransferase activity"/>
    <property type="evidence" value="ECO:0007669"/>
    <property type="project" value="UniProtKB-UniRule"/>
</dbReference>
<dbReference type="GO" id="GO:0000287">
    <property type="term" value="F:magnesium ion binding"/>
    <property type="evidence" value="ECO:0007669"/>
    <property type="project" value="UniProtKB-UniRule"/>
</dbReference>
<dbReference type="GO" id="GO:0000162">
    <property type="term" value="P:L-tryptophan biosynthetic process"/>
    <property type="evidence" value="ECO:0007669"/>
    <property type="project" value="UniProtKB-UniRule"/>
</dbReference>
<dbReference type="FunFam" id="3.40.1030.10:FF:000002">
    <property type="entry name" value="Anthranilate phosphoribosyltransferase"/>
    <property type="match status" value="1"/>
</dbReference>
<dbReference type="Gene3D" id="3.40.1030.10">
    <property type="entry name" value="Nucleoside phosphorylase/phosphoribosyltransferase catalytic domain"/>
    <property type="match status" value="1"/>
</dbReference>
<dbReference type="Gene3D" id="1.20.970.10">
    <property type="entry name" value="Transferase, Pyrimidine Nucleoside Phosphorylase, Chain C"/>
    <property type="match status" value="1"/>
</dbReference>
<dbReference type="HAMAP" id="MF_00211">
    <property type="entry name" value="TrpD"/>
    <property type="match status" value="1"/>
</dbReference>
<dbReference type="InterPro" id="IPR005940">
    <property type="entry name" value="Anthranilate_Pribosyl_Tfrase"/>
</dbReference>
<dbReference type="InterPro" id="IPR000312">
    <property type="entry name" value="Glycosyl_Trfase_fam3"/>
</dbReference>
<dbReference type="InterPro" id="IPR036320">
    <property type="entry name" value="Glycosyl_Trfase_fam3_N_dom_sf"/>
</dbReference>
<dbReference type="InterPro" id="IPR035902">
    <property type="entry name" value="Nuc_phospho_transferase"/>
</dbReference>
<dbReference type="NCBIfam" id="TIGR01245">
    <property type="entry name" value="trpD"/>
    <property type="match status" value="1"/>
</dbReference>
<dbReference type="PANTHER" id="PTHR43285">
    <property type="entry name" value="ANTHRANILATE PHOSPHORIBOSYLTRANSFERASE"/>
    <property type="match status" value="1"/>
</dbReference>
<dbReference type="PANTHER" id="PTHR43285:SF2">
    <property type="entry name" value="ANTHRANILATE PHOSPHORIBOSYLTRANSFERASE"/>
    <property type="match status" value="1"/>
</dbReference>
<dbReference type="Pfam" id="PF00591">
    <property type="entry name" value="Glycos_transf_3"/>
    <property type="match status" value="1"/>
</dbReference>
<dbReference type="SUPFAM" id="SSF52418">
    <property type="entry name" value="Nucleoside phosphorylase/phosphoribosyltransferase catalytic domain"/>
    <property type="match status" value="1"/>
</dbReference>
<dbReference type="SUPFAM" id="SSF47648">
    <property type="entry name" value="Nucleoside phosphorylase/phosphoribosyltransferase N-terminal domain"/>
    <property type="match status" value="1"/>
</dbReference>
<proteinExistence type="inferred from homology"/>
<comment type="function">
    <text evidence="1">Catalyzes the transfer of the phosphoribosyl group of 5-phosphorylribose-1-pyrophosphate (PRPP) to anthranilate to yield N-(5'-phosphoribosyl)-anthranilate (PRA).</text>
</comment>
<comment type="catalytic activity">
    <reaction evidence="1">
        <text>N-(5-phospho-beta-D-ribosyl)anthranilate + diphosphate = 5-phospho-alpha-D-ribose 1-diphosphate + anthranilate</text>
        <dbReference type="Rhea" id="RHEA:11768"/>
        <dbReference type="ChEBI" id="CHEBI:16567"/>
        <dbReference type="ChEBI" id="CHEBI:18277"/>
        <dbReference type="ChEBI" id="CHEBI:33019"/>
        <dbReference type="ChEBI" id="CHEBI:58017"/>
        <dbReference type="EC" id="2.4.2.18"/>
    </reaction>
</comment>
<comment type="cofactor">
    <cofactor evidence="1">
        <name>Mg(2+)</name>
        <dbReference type="ChEBI" id="CHEBI:18420"/>
    </cofactor>
    <text evidence="1">Binds 2 magnesium ions per monomer.</text>
</comment>
<comment type="pathway">
    <text evidence="1">Amino-acid biosynthesis; L-tryptophan biosynthesis; L-tryptophan from chorismate: step 2/5.</text>
</comment>
<comment type="subunit">
    <text evidence="1">Homodimer.</text>
</comment>
<comment type="similarity">
    <text evidence="1">Belongs to the anthranilate phosphoribosyltransferase family.</text>
</comment>
<sequence length="338" mass="36992">MTLIQKIQQQNNLTQQDINEFIQTLINPDIENEEKASLLSEYTNRPLNQVEVTYLVQAMIQTMYPVQPVYPEAMCVCGTGGDKSNSFNISTTVSFVVAAANVNVLKHGNKSITSASGSSDLLNKMGIAATHVPDVEGRMNETGLAFLNATDTYPVMKHIQPIRKMMDGPTIFNILGPMIHPYKLDYQVVGVFNPDFVKAMAETLYDLKRKRAIVLHGANGMDEATLSGDNLIYEVNQETGVTSYYLNAEDVGLKPAANGTLRGGTPAENLEITLDILTGKDHSSKRDVVVLNAGIALYVSEKADSIKEGVQLAQQLIDDGKAFEQYKKTGGQVYDHIG</sequence>
<name>TRPD_STACT</name>
<evidence type="ECO:0000255" key="1">
    <source>
        <dbReference type="HAMAP-Rule" id="MF_00211"/>
    </source>
</evidence>
<protein>
    <recommendedName>
        <fullName evidence="1">Anthranilate phosphoribosyltransferase</fullName>
        <ecNumber evidence="1">2.4.2.18</ecNumber>
    </recommendedName>
</protein>
<feature type="chain" id="PRO_1000198839" description="Anthranilate phosphoribosyltransferase">
    <location>
        <begin position="1"/>
        <end position="338"/>
    </location>
</feature>
<feature type="binding site" evidence="1">
    <location>
        <position position="78"/>
    </location>
    <ligand>
        <name>5-phospho-alpha-D-ribose 1-diphosphate</name>
        <dbReference type="ChEBI" id="CHEBI:58017"/>
    </ligand>
</feature>
<feature type="binding site" evidence="1">
    <location>
        <position position="78"/>
    </location>
    <ligand>
        <name>anthranilate</name>
        <dbReference type="ChEBI" id="CHEBI:16567"/>
        <label>1</label>
    </ligand>
</feature>
<feature type="binding site" evidence="1">
    <location>
        <begin position="81"/>
        <end position="82"/>
    </location>
    <ligand>
        <name>5-phospho-alpha-D-ribose 1-diphosphate</name>
        <dbReference type="ChEBI" id="CHEBI:58017"/>
    </ligand>
</feature>
<feature type="binding site" evidence="1">
    <location>
        <position position="86"/>
    </location>
    <ligand>
        <name>5-phospho-alpha-D-ribose 1-diphosphate</name>
        <dbReference type="ChEBI" id="CHEBI:58017"/>
    </ligand>
</feature>
<feature type="binding site" evidence="1">
    <location>
        <begin position="88"/>
        <end position="91"/>
    </location>
    <ligand>
        <name>5-phospho-alpha-D-ribose 1-diphosphate</name>
        <dbReference type="ChEBI" id="CHEBI:58017"/>
    </ligand>
</feature>
<feature type="binding site" evidence="1">
    <location>
        <position position="90"/>
    </location>
    <ligand>
        <name>Mg(2+)</name>
        <dbReference type="ChEBI" id="CHEBI:18420"/>
        <label>1</label>
    </ligand>
</feature>
<feature type="binding site" evidence="1">
    <location>
        <begin position="106"/>
        <end position="114"/>
    </location>
    <ligand>
        <name>5-phospho-alpha-D-ribose 1-diphosphate</name>
        <dbReference type="ChEBI" id="CHEBI:58017"/>
    </ligand>
</feature>
<feature type="binding site" evidence="1">
    <location>
        <position position="109"/>
    </location>
    <ligand>
        <name>anthranilate</name>
        <dbReference type="ChEBI" id="CHEBI:16567"/>
        <label>1</label>
    </ligand>
</feature>
<feature type="binding site" evidence="1">
    <location>
        <position position="118"/>
    </location>
    <ligand>
        <name>5-phospho-alpha-D-ribose 1-diphosphate</name>
        <dbReference type="ChEBI" id="CHEBI:58017"/>
    </ligand>
</feature>
<feature type="binding site" evidence="1">
    <location>
        <position position="163"/>
    </location>
    <ligand>
        <name>anthranilate</name>
        <dbReference type="ChEBI" id="CHEBI:16567"/>
        <label>2</label>
    </ligand>
</feature>
<feature type="binding site" evidence="1">
    <location>
        <position position="222"/>
    </location>
    <ligand>
        <name>Mg(2+)</name>
        <dbReference type="ChEBI" id="CHEBI:18420"/>
        <label>2</label>
    </ligand>
</feature>
<feature type="binding site" evidence="1">
    <location>
        <position position="223"/>
    </location>
    <ligand>
        <name>Mg(2+)</name>
        <dbReference type="ChEBI" id="CHEBI:18420"/>
        <label>1</label>
    </ligand>
</feature>
<feature type="binding site" evidence="1">
    <location>
        <position position="223"/>
    </location>
    <ligand>
        <name>Mg(2+)</name>
        <dbReference type="ChEBI" id="CHEBI:18420"/>
        <label>2</label>
    </ligand>
</feature>
<keyword id="KW-0028">Amino-acid biosynthesis</keyword>
<keyword id="KW-0057">Aromatic amino acid biosynthesis</keyword>
<keyword id="KW-0328">Glycosyltransferase</keyword>
<keyword id="KW-0460">Magnesium</keyword>
<keyword id="KW-0479">Metal-binding</keyword>
<keyword id="KW-1185">Reference proteome</keyword>
<keyword id="KW-0808">Transferase</keyword>
<keyword id="KW-0822">Tryptophan biosynthesis</keyword>
<gene>
    <name evidence="1" type="primary">trpD</name>
    <name type="ordered locus">Sca_1014</name>
</gene>
<organism>
    <name type="scientific">Staphylococcus carnosus (strain TM300)</name>
    <dbReference type="NCBI Taxonomy" id="396513"/>
    <lineage>
        <taxon>Bacteria</taxon>
        <taxon>Bacillati</taxon>
        <taxon>Bacillota</taxon>
        <taxon>Bacilli</taxon>
        <taxon>Bacillales</taxon>
        <taxon>Staphylococcaceae</taxon>
        <taxon>Staphylococcus</taxon>
    </lineage>
</organism>
<accession>B9DP50</accession>